<gene>
    <name type="primary">Nr2f6</name>
    <name type="synonym">Ear-2</name>
    <name type="synonym">Ear2</name>
    <name type="synonym">Erbal2</name>
</gene>
<keyword id="KW-0238">DNA-binding</keyword>
<keyword id="KW-0479">Metal-binding</keyword>
<keyword id="KW-0539">Nucleus</keyword>
<keyword id="KW-0597">Phosphoprotein</keyword>
<keyword id="KW-0675">Receptor</keyword>
<keyword id="KW-1185">Reference proteome</keyword>
<keyword id="KW-0678">Repressor</keyword>
<keyword id="KW-0804">Transcription</keyword>
<keyword id="KW-0805">Transcription regulation</keyword>
<keyword id="KW-0862">Zinc</keyword>
<keyword id="KW-0863">Zinc-finger</keyword>
<dbReference type="EMBL" id="X76654">
    <property type="protein sequence ID" value="CAA54097.1"/>
    <property type="molecule type" value="mRNA"/>
</dbReference>
<dbReference type="EMBL" id="L25674">
    <property type="protein sequence ID" value="AAA37532.1"/>
    <property type="molecule type" value="mRNA"/>
</dbReference>
<dbReference type="EMBL" id="AK131941">
    <property type="protein sequence ID" value="BAE20887.1"/>
    <property type="molecule type" value="mRNA"/>
</dbReference>
<dbReference type="EMBL" id="AK171552">
    <property type="protein sequence ID" value="BAE42523.1"/>
    <property type="molecule type" value="mRNA"/>
</dbReference>
<dbReference type="EMBL" id="CH466569">
    <property type="protein sequence ID" value="EDL28911.1"/>
    <property type="molecule type" value="Genomic_DNA"/>
</dbReference>
<dbReference type="EMBL" id="BC008138">
    <property type="protein sequence ID" value="AAH08138.1"/>
    <property type="molecule type" value="mRNA"/>
</dbReference>
<dbReference type="CCDS" id="CCDS22392.1"/>
<dbReference type="PIR" id="I48734">
    <property type="entry name" value="S44285"/>
</dbReference>
<dbReference type="PIR" id="I49640">
    <property type="entry name" value="I49640"/>
</dbReference>
<dbReference type="RefSeq" id="NP_034280.2">
    <property type="nucleotide sequence ID" value="NM_010150.3"/>
</dbReference>
<dbReference type="SMR" id="P43136"/>
<dbReference type="BioGRID" id="199494">
    <property type="interactions" value="7"/>
</dbReference>
<dbReference type="FunCoup" id="P43136">
    <property type="interactions" value="959"/>
</dbReference>
<dbReference type="IntAct" id="P43136">
    <property type="interactions" value="5"/>
</dbReference>
<dbReference type="STRING" id="10090.ENSMUSP00000002466"/>
<dbReference type="GlyGen" id="P43136">
    <property type="glycosylation" value="1 site, 1 N-linked glycan (1 site)"/>
</dbReference>
<dbReference type="iPTMnet" id="P43136"/>
<dbReference type="PhosphoSitePlus" id="P43136"/>
<dbReference type="PaxDb" id="10090-ENSMUSP00000002466"/>
<dbReference type="PeptideAtlas" id="P43136"/>
<dbReference type="ProteomicsDB" id="293721"/>
<dbReference type="Pumba" id="P43136"/>
<dbReference type="Antibodypedia" id="14278">
    <property type="antibodies" value="387 antibodies from 35 providers"/>
</dbReference>
<dbReference type="DNASU" id="13864"/>
<dbReference type="Ensembl" id="ENSMUST00000002466.9">
    <property type="protein sequence ID" value="ENSMUSP00000002466.9"/>
    <property type="gene ID" value="ENSMUSG00000002393.15"/>
</dbReference>
<dbReference type="GeneID" id="13864"/>
<dbReference type="KEGG" id="mmu:13864"/>
<dbReference type="UCSC" id="uc009mcx.1">
    <property type="organism name" value="mouse"/>
</dbReference>
<dbReference type="AGR" id="MGI:1352453"/>
<dbReference type="CTD" id="2063"/>
<dbReference type="MGI" id="MGI:1352453">
    <property type="gene designation" value="Nr2f6"/>
</dbReference>
<dbReference type="VEuPathDB" id="HostDB:ENSMUSG00000002393"/>
<dbReference type="eggNOG" id="KOG3575">
    <property type="taxonomic scope" value="Eukaryota"/>
</dbReference>
<dbReference type="GeneTree" id="ENSGT00940000160748"/>
<dbReference type="HOGENOM" id="CLU_007368_20_1_1"/>
<dbReference type="InParanoid" id="P43136"/>
<dbReference type="OMA" id="WARTIPY"/>
<dbReference type="OrthoDB" id="5873264at2759"/>
<dbReference type="PhylomeDB" id="P43136"/>
<dbReference type="TreeFam" id="TF352097"/>
<dbReference type="Reactome" id="R-MMU-383280">
    <property type="pathway name" value="Nuclear Receptor transcription pathway"/>
</dbReference>
<dbReference type="BioGRID-ORCS" id="13864">
    <property type="hits" value="2 hits in 81 CRISPR screens"/>
</dbReference>
<dbReference type="ChiTaRS" id="Nr2f6">
    <property type="organism name" value="mouse"/>
</dbReference>
<dbReference type="PRO" id="PR:P43136"/>
<dbReference type="Proteomes" id="UP000000589">
    <property type="component" value="Chromosome 8"/>
</dbReference>
<dbReference type="RNAct" id="P43136">
    <property type="molecule type" value="protein"/>
</dbReference>
<dbReference type="Bgee" id="ENSMUSG00000002393">
    <property type="expression patterns" value="Expressed in floor plate of midbrain and 264 other cell types or tissues"/>
</dbReference>
<dbReference type="ExpressionAtlas" id="P43136">
    <property type="expression patterns" value="baseline and differential"/>
</dbReference>
<dbReference type="GO" id="GO:0005634">
    <property type="term" value="C:nucleus"/>
    <property type="evidence" value="ECO:0007669"/>
    <property type="project" value="UniProtKB-SubCell"/>
</dbReference>
<dbReference type="GO" id="GO:0001227">
    <property type="term" value="F:DNA-binding transcription repressor activity, RNA polymerase II-specific"/>
    <property type="evidence" value="ECO:0000314"/>
    <property type="project" value="NTNU_SB"/>
</dbReference>
<dbReference type="GO" id="GO:0000978">
    <property type="term" value="F:RNA polymerase II cis-regulatory region sequence-specific DNA binding"/>
    <property type="evidence" value="ECO:0000314"/>
    <property type="project" value="NTNU_SB"/>
</dbReference>
<dbReference type="GO" id="GO:0008270">
    <property type="term" value="F:zinc ion binding"/>
    <property type="evidence" value="ECO:0007669"/>
    <property type="project" value="UniProtKB-KW"/>
</dbReference>
<dbReference type="GO" id="GO:0050965">
    <property type="term" value="P:detection of temperature stimulus involved in sensory perception of pain"/>
    <property type="evidence" value="ECO:0000315"/>
    <property type="project" value="MGI"/>
</dbReference>
<dbReference type="GO" id="GO:0043153">
    <property type="term" value="P:entrainment of circadian clock by photoperiod"/>
    <property type="evidence" value="ECO:0000315"/>
    <property type="project" value="MGI"/>
</dbReference>
<dbReference type="GO" id="GO:0000122">
    <property type="term" value="P:negative regulation of transcription by RNA polymerase II"/>
    <property type="evidence" value="ECO:0000314"/>
    <property type="project" value="NTNU_SB"/>
</dbReference>
<dbReference type="GO" id="GO:0048666">
    <property type="term" value="P:neuron development"/>
    <property type="evidence" value="ECO:0000315"/>
    <property type="project" value="MGI"/>
</dbReference>
<dbReference type="CDD" id="cd06958">
    <property type="entry name" value="NR_DBD_COUP_TF"/>
    <property type="match status" value="1"/>
</dbReference>
<dbReference type="CDD" id="cd06948">
    <property type="entry name" value="NR_LBD_COUP-TF"/>
    <property type="match status" value="1"/>
</dbReference>
<dbReference type="FunFam" id="3.30.50.10:FF:000016">
    <property type="entry name" value="Nuclear receptor subfamily 2 group F member 1"/>
    <property type="match status" value="1"/>
</dbReference>
<dbReference type="FunFam" id="1.10.565.10:FF:000020">
    <property type="entry name" value="Nuclear receptor subfamily 2 group F member 6"/>
    <property type="match status" value="1"/>
</dbReference>
<dbReference type="Gene3D" id="3.30.50.10">
    <property type="entry name" value="Erythroid Transcription Factor GATA-1, subunit A"/>
    <property type="match status" value="1"/>
</dbReference>
<dbReference type="Gene3D" id="1.10.565.10">
    <property type="entry name" value="Retinoid X Receptor"/>
    <property type="match status" value="1"/>
</dbReference>
<dbReference type="InterPro" id="IPR035500">
    <property type="entry name" value="NHR-like_dom_sf"/>
</dbReference>
<dbReference type="InterPro" id="IPR000536">
    <property type="entry name" value="Nucl_hrmn_rcpt_lig-bd"/>
</dbReference>
<dbReference type="InterPro" id="IPR050274">
    <property type="entry name" value="Nuclear_hormone_rcpt_NR2"/>
</dbReference>
<dbReference type="InterPro" id="IPR001723">
    <property type="entry name" value="Nuclear_hrmn_rcpt"/>
</dbReference>
<dbReference type="InterPro" id="IPR001628">
    <property type="entry name" value="Znf_hrmn_rcpt"/>
</dbReference>
<dbReference type="InterPro" id="IPR013088">
    <property type="entry name" value="Znf_NHR/GATA"/>
</dbReference>
<dbReference type="PANTHER" id="PTHR24083">
    <property type="entry name" value="NUCLEAR HORMONE RECEPTOR"/>
    <property type="match status" value="1"/>
</dbReference>
<dbReference type="Pfam" id="PF00104">
    <property type="entry name" value="Hormone_recep"/>
    <property type="match status" value="1"/>
</dbReference>
<dbReference type="Pfam" id="PF00105">
    <property type="entry name" value="zf-C4"/>
    <property type="match status" value="1"/>
</dbReference>
<dbReference type="PRINTS" id="PR01282">
    <property type="entry name" value="COUPTNFACTOR"/>
</dbReference>
<dbReference type="PRINTS" id="PR00398">
    <property type="entry name" value="STRDHORMONER"/>
</dbReference>
<dbReference type="PRINTS" id="PR00047">
    <property type="entry name" value="STROIDFINGER"/>
</dbReference>
<dbReference type="SMART" id="SM00430">
    <property type="entry name" value="HOLI"/>
    <property type="match status" value="1"/>
</dbReference>
<dbReference type="SMART" id="SM00399">
    <property type="entry name" value="ZnF_C4"/>
    <property type="match status" value="1"/>
</dbReference>
<dbReference type="SUPFAM" id="SSF57716">
    <property type="entry name" value="Glucocorticoid receptor-like (DNA-binding domain)"/>
    <property type="match status" value="1"/>
</dbReference>
<dbReference type="SUPFAM" id="SSF48508">
    <property type="entry name" value="Nuclear receptor ligand-binding domain"/>
    <property type="match status" value="1"/>
</dbReference>
<dbReference type="PROSITE" id="PS51843">
    <property type="entry name" value="NR_LBD"/>
    <property type="match status" value="1"/>
</dbReference>
<dbReference type="PROSITE" id="PS00031">
    <property type="entry name" value="NUCLEAR_REC_DBD_1"/>
    <property type="match status" value="1"/>
</dbReference>
<dbReference type="PROSITE" id="PS51030">
    <property type="entry name" value="NUCLEAR_REC_DBD_2"/>
    <property type="match status" value="1"/>
</dbReference>
<accession>P43136</accession>
<accession>Q61504</accession>
<accession>Q922G8</accession>
<reference key="1">
    <citation type="journal article" date="1994" name="Mech. Dev.">
        <title>Cloning and expression during development of three murine members of the COUP family of nuclear orphan receptors.</title>
        <authorList>
            <person name="Jonk L.J.C."/>
            <person name="de Jonge M.E.J."/>
            <person name="Pals C.E.G.M."/>
            <person name="Wissink S."/>
            <person name="Vervaart J.M.A."/>
            <person name="Schoorlemmer J."/>
            <person name="Kruijer W."/>
        </authorList>
    </citation>
    <scope>NUCLEOTIDE SEQUENCE [MRNA]</scope>
</reference>
<reference key="2">
    <citation type="journal article" date="1994" name="Gene">
        <title>The sequence of a murine cDNA encoding Ear-2, a nuclear orphan receptor.</title>
        <authorList>
            <person name="Barnhart K.M."/>
            <person name="Mellon P.L."/>
        </authorList>
    </citation>
    <scope>NUCLEOTIDE SEQUENCE [MRNA]</scope>
    <source>
        <tissue>Pituitary</tissue>
    </source>
</reference>
<reference key="3">
    <citation type="journal article" date="2005" name="Science">
        <title>The transcriptional landscape of the mammalian genome.</title>
        <authorList>
            <person name="Carninci P."/>
            <person name="Kasukawa T."/>
            <person name="Katayama S."/>
            <person name="Gough J."/>
            <person name="Frith M.C."/>
            <person name="Maeda N."/>
            <person name="Oyama R."/>
            <person name="Ravasi T."/>
            <person name="Lenhard B."/>
            <person name="Wells C."/>
            <person name="Kodzius R."/>
            <person name="Shimokawa K."/>
            <person name="Bajic V.B."/>
            <person name="Brenner S.E."/>
            <person name="Batalov S."/>
            <person name="Forrest A.R."/>
            <person name="Zavolan M."/>
            <person name="Davis M.J."/>
            <person name="Wilming L.G."/>
            <person name="Aidinis V."/>
            <person name="Allen J.E."/>
            <person name="Ambesi-Impiombato A."/>
            <person name="Apweiler R."/>
            <person name="Aturaliya R.N."/>
            <person name="Bailey T.L."/>
            <person name="Bansal M."/>
            <person name="Baxter L."/>
            <person name="Beisel K.W."/>
            <person name="Bersano T."/>
            <person name="Bono H."/>
            <person name="Chalk A.M."/>
            <person name="Chiu K.P."/>
            <person name="Choudhary V."/>
            <person name="Christoffels A."/>
            <person name="Clutterbuck D.R."/>
            <person name="Crowe M.L."/>
            <person name="Dalla E."/>
            <person name="Dalrymple B.P."/>
            <person name="de Bono B."/>
            <person name="Della Gatta G."/>
            <person name="di Bernardo D."/>
            <person name="Down T."/>
            <person name="Engstrom P."/>
            <person name="Fagiolini M."/>
            <person name="Faulkner G."/>
            <person name="Fletcher C.F."/>
            <person name="Fukushima T."/>
            <person name="Furuno M."/>
            <person name="Futaki S."/>
            <person name="Gariboldi M."/>
            <person name="Georgii-Hemming P."/>
            <person name="Gingeras T.R."/>
            <person name="Gojobori T."/>
            <person name="Green R.E."/>
            <person name="Gustincich S."/>
            <person name="Harbers M."/>
            <person name="Hayashi Y."/>
            <person name="Hensch T.K."/>
            <person name="Hirokawa N."/>
            <person name="Hill D."/>
            <person name="Huminiecki L."/>
            <person name="Iacono M."/>
            <person name="Ikeo K."/>
            <person name="Iwama A."/>
            <person name="Ishikawa T."/>
            <person name="Jakt M."/>
            <person name="Kanapin A."/>
            <person name="Katoh M."/>
            <person name="Kawasawa Y."/>
            <person name="Kelso J."/>
            <person name="Kitamura H."/>
            <person name="Kitano H."/>
            <person name="Kollias G."/>
            <person name="Krishnan S.P."/>
            <person name="Kruger A."/>
            <person name="Kummerfeld S.K."/>
            <person name="Kurochkin I.V."/>
            <person name="Lareau L.F."/>
            <person name="Lazarevic D."/>
            <person name="Lipovich L."/>
            <person name="Liu J."/>
            <person name="Liuni S."/>
            <person name="McWilliam S."/>
            <person name="Madan Babu M."/>
            <person name="Madera M."/>
            <person name="Marchionni L."/>
            <person name="Matsuda H."/>
            <person name="Matsuzawa S."/>
            <person name="Miki H."/>
            <person name="Mignone F."/>
            <person name="Miyake S."/>
            <person name="Morris K."/>
            <person name="Mottagui-Tabar S."/>
            <person name="Mulder N."/>
            <person name="Nakano N."/>
            <person name="Nakauchi H."/>
            <person name="Ng P."/>
            <person name="Nilsson R."/>
            <person name="Nishiguchi S."/>
            <person name="Nishikawa S."/>
            <person name="Nori F."/>
            <person name="Ohara O."/>
            <person name="Okazaki Y."/>
            <person name="Orlando V."/>
            <person name="Pang K.C."/>
            <person name="Pavan W.J."/>
            <person name="Pavesi G."/>
            <person name="Pesole G."/>
            <person name="Petrovsky N."/>
            <person name="Piazza S."/>
            <person name="Reed J."/>
            <person name="Reid J.F."/>
            <person name="Ring B.Z."/>
            <person name="Ringwald M."/>
            <person name="Rost B."/>
            <person name="Ruan Y."/>
            <person name="Salzberg S.L."/>
            <person name="Sandelin A."/>
            <person name="Schneider C."/>
            <person name="Schoenbach C."/>
            <person name="Sekiguchi K."/>
            <person name="Semple C.A."/>
            <person name="Seno S."/>
            <person name="Sessa L."/>
            <person name="Sheng Y."/>
            <person name="Shibata Y."/>
            <person name="Shimada H."/>
            <person name="Shimada K."/>
            <person name="Silva D."/>
            <person name="Sinclair B."/>
            <person name="Sperling S."/>
            <person name="Stupka E."/>
            <person name="Sugiura K."/>
            <person name="Sultana R."/>
            <person name="Takenaka Y."/>
            <person name="Taki K."/>
            <person name="Tammoja K."/>
            <person name="Tan S.L."/>
            <person name="Tang S."/>
            <person name="Taylor M.S."/>
            <person name="Tegner J."/>
            <person name="Teichmann S.A."/>
            <person name="Ueda H.R."/>
            <person name="van Nimwegen E."/>
            <person name="Verardo R."/>
            <person name="Wei C.L."/>
            <person name="Yagi K."/>
            <person name="Yamanishi H."/>
            <person name="Zabarovsky E."/>
            <person name="Zhu S."/>
            <person name="Zimmer A."/>
            <person name="Hide W."/>
            <person name="Bult C."/>
            <person name="Grimmond S.M."/>
            <person name="Teasdale R.D."/>
            <person name="Liu E.T."/>
            <person name="Brusic V."/>
            <person name="Quackenbush J."/>
            <person name="Wahlestedt C."/>
            <person name="Mattick J.S."/>
            <person name="Hume D.A."/>
            <person name="Kai C."/>
            <person name="Sasaki D."/>
            <person name="Tomaru Y."/>
            <person name="Fukuda S."/>
            <person name="Kanamori-Katayama M."/>
            <person name="Suzuki M."/>
            <person name="Aoki J."/>
            <person name="Arakawa T."/>
            <person name="Iida J."/>
            <person name="Imamura K."/>
            <person name="Itoh M."/>
            <person name="Kato T."/>
            <person name="Kawaji H."/>
            <person name="Kawagashira N."/>
            <person name="Kawashima T."/>
            <person name="Kojima M."/>
            <person name="Kondo S."/>
            <person name="Konno H."/>
            <person name="Nakano K."/>
            <person name="Ninomiya N."/>
            <person name="Nishio T."/>
            <person name="Okada M."/>
            <person name="Plessy C."/>
            <person name="Shibata K."/>
            <person name="Shiraki T."/>
            <person name="Suzuki S."/>
            <person name="Tagami M."/>
            <person name="Waki K."/>
            <person name="Watahiki A."/>
            <person name="Okamura-Oho Y."/>
            <person name="Suzuki H."/>
            <person name="Kawai J."/>
            <person name="Hayashizaki Y."/>
        </authorList>
    </citation>
    <scope>NUCLEOTIDE SEQUENCE [LARGE SCALE MRNA]</scope>
    <source>
        <strain>C57BL/6J</strain>
    </source>
</reference>
<reference key="4">
    <citation type="submission" date="2005-07" db="EMBL/GenBank/DDBJ databases">
        <authorList>
            <person name="Mural R.J."/>
            <person name="Adams M.D."/>
            <person name="Myers E.W."/>
            <person name="Smith H.O."/>
            <person name="Venter J.C."/>
        </authorList>
    </citation>
    <scope>NUCLEOTIDE SEQUENCE [LARGE SCALE GENOMIC DNA]</scope>
</reference>
<reference key="5">
    <citation type="journal article" date="2004" name="Genome Res.">
        <title>The status, quality, and expansion of the NIH full-length cDNA project: the Mammalian Gene Collection (MGC).</title>
        <authorList>
            <consortium name="The MGC Project Team"/>
        </authorList>
    </citation>
    <scope>NUCLEOTIDE SEQUENCE [LARGE SCALE MRNA]</scope>
    <source>
        <strain>FVB/N</strain>
        <tissue>Mammary tumor</tissue>
    </source>
</reference>
<reference key="6">
    <citation type="journal article" date="1999" name="J. Biol. Chem.">
        <title>Heterodimeric interactions between chicken ovalbumin upstream promoter-transcription factor family members ARP1 and ear2.</title>
        <authorList>
            <person name="Avram D."/>
            <person name="Ishmael J.E."/>
            <person name="Nevrivy D.J."/>
            <person name="Peterson V.J."/>
            <person name="Lee S.H."/>
            <person name="Dowell P."/>
            <person name="Leid M."/>
        </authorList>
    </citation>
    <scope>SUBUNIT</scope>
    <scope>INTERACTION WITH NR2F2</scope>
</reference>
<reference key="7">
    <citation type="journal article" date="2001" name="J. Biol. Chem.">
        <title>Friend of GATA 2 physically interacts with chicken ovalbumin upstream promoter-TF2 (COUP-TF2) and COUP-TF3 and represses COUP-TF2-dependent activation of the atrial natriuretic factor promoter.</title>
        <authorList>
            <person name="Huggins G.S."/>
            <person name="Bacani C.J."/>
            <person name="Boltax J."/>
            <person name="Aikawa R."/>
            <person name="Leiden J.M."/>
        </authorList>
    </citation>
    <scope>INTERACTION WITH ZFPM2</scope>
</reference>
<reference key="8">
    <citation type="journal article" date="2003" name="Circ. Res.">
        <title>Identification of a nuclear orphan receptor (Ear2) as a negative regulator of renin gene transcription.</title>
        <authorList>
            <person name="Liu X."/>
            <person name="Huang X."/>
            <person name="Sigmund C.D."/>
        </authorList>
    </citation>
    <scope>FUNCTION</scope>
    <scope>DNA-BINDING</scope>
    <scope>SUBCELLULAR LOCATION</scope>
</reference>
<reference key="9">
    <citation type="journal article" date="2005" name="Genes Dev.">
        <title>Abnormal development of the locus coeruleus in Ear2(Nr2f6)-deficient mice impairs the functionality of the forebrain clock and affects nociception.</title>
        <authorList>
            <person name="Warnecke M."/>
            <person name="Oster H."/>
            <person name="Revelli J.P."/>
            <person name="Alvarez-Bolado G."/>
            <person name="Eichele G."/>
        </authorList>
    </citation>
    <scope>FUNCTION</scope>
    <scope>DISRUPTION PHENOTYPE</scope>
    <scope>DEVELOPMENTAL STAGE</scope>
</reference>
<reference key="10">
    <citation type="journal article" date="2007" name="Proc. Natl. Acad. Sci. U.S.A.">
        <title>Large-scale phosphorylation analysis of mouse liver.</title>
        <authorList>
            <person name="Villen J."/>
            <person name="Beausoleil S.A."/>
            <person name="Gerber S.A."/>
            <person name="Gygi S.P."/>
        </authorList>
    </citation>
    <scope>IDENTIFICATION BY MASS SPECTROMETRY [LARGE SCALE ANALYSIS]</scope>
    <source>
        <tissue>Liver</tissue>
    </source>
</reference>
<reference key="11">
    <citation type="journal article" date="2008" name="Immunity">
        <title>The nuclear orphan receptor NR2F6 suppresses lymphocyte activation and T helper 17-dependent autoimmunity.</title>
        <authorList>
            <person name="Hermann-Kleiter N."/>
            <person name="Gruber T."/>
            <person name="Lutz-Nicoladoni C."/>
            <person name="Thuille N."/>
            <person name="Fresser F."/>
            <person name="Labi V."/>
            <person name="Schiefermeier N."/>
            <person name="Warnecke M."/>
            <person name="Huber L."/>
            <person name="Villunger A."/>
            <person name="Eichele G."/>
            <person name="Kaminski S."/>
            <person name="Baier G."/>
        </authorList>
    </citation>
    <scope>FUNCTION</scope>
    <scope>DISRUPTION PHENOTYPE</scope>
</reference>
<reference key="12">
    <citation type="journal article" date="2010" name="Cell">
        <title>A tissue-specific atlas of mouse protein phosphorylation and expression.</title>
        <authorList>
            <person name="Huttlin E.L."/>
            <person name="Jedrychowski M.P."/>
            <person name="Elias J.E."/>
            <person name="Goswami T."/>
            <person name="Rad R."/>
            <person name="Beausoleil S.A."/>
            <person name="Villen J."/>
            <person name="Haas W."/>
            <person name="Sowa M.E."/>
            <person name="Gygi S.P."/>
        </authorList>
    </citation>
    <scope>PHOSPHORYLATION [LARGE SCALE ANALYSIS] AT SER-35</scope>
    <scope>IDENTIFICATION BY MASS SPECTROMETRY [LARGE SCALE ANALYSIS]</scope>
    <source>
        <tissue>Brain</tissue>
        <tissue>Kidney</tissue>
        <tissue>Testis</tissue>
    </source>
</reference>
<organism>
    <name type="scientific">Mus musculus</name>
    <name type="common">Mouse</name>
    <dbReference type="NCBI Taxonomy" id="10090"/>
    <lineage>
        <taxon>Eukaryota</taxon>
        <taxon>Metazoa</taxon>
        <taxon>Chordata</taxon>
        <taxon>Craniata</taxon>
        <taxon>Vertebrata</taxon>
        <taxon>Euteleostomi</taxon>
        <taxon>Mammalia</taxon>
        <taxon>Eutheria</taxon>
        <taxon>Euarchontoglires</taxon>
        <taxon>Glires</taxon>
        <taxon>Rodentia</taxon>
        <taxon>Myomorpha</taxon>
        <taxon>Muroidea</taxon>
        <taxon>Muridae</taxon>
        <taxon>Murinae</taxon>
        <taxon>Mus</taxon>
        <taxon>Mus</taxon>
    </lineage>
</organism>
<name>NR2F6_MOUSE</name>
<proteinExistence type="evidence at protein level"/>
<protein>
    <recommendedName>
        <fullName>Nuclear receptor subfamily 2 group F member 6</fullName>
    </recommendedName>
    <alternativeName>
        <fullName>COUP transcription factor 3</fullName>
        <shortName>COUP-TF3</shortName>
    </alternativeName>
    <alternativeName>
        <fullName>V-erbA-related protein 2</fullName>
        <shortName>EAR-2</shortName>
    </alternativeName>
</protein>
<evidence type="ECO:0000250" key="1"/>
<evidence type="ECO:0000250" key="2">
    <source>
        <dbReference type="UniProtKB" id="P10588"/>
    </source>
</evidence>
<evidence type="ECO:0000255" key="3">
    <source>
        <dbReference type="PROSITE-ProRule" id="PRU00407"/>
    </source>
</evidence>
<evidence type="ECO:0000255" key="4">
    <source>
        <dbReference type="PROSITE-ProRule" id="PRU01189"/>
    </source>
</evidence>
<evidence type="ECO:0000256" key="5">
    <source>
        <dbReference type="SAM" id="MobiDB-lite"/>
    </source>
</evidence>
<evidence type="ECO:0000269" key="6">
    <source>
    </source>
</evidence>
<evidence type="ECO:0000269" key="7">
    <source>
    </source>
</evidence>
<evidence type="ECO:0000269" key="8">
    <source>
    </source>
</evidence>
<evidence type="ECO:0000305" key="9"/>
<evidence type="ECO:0007744" key="10">
    <source>
    </source>
</evidence>
<sequence>MAMVTGGWGDPGGDTNGVDKAGGSYPRATEDDSASPPGATSDAEPGDEERPGLQVDCVVCGDKSSGKHYGVFTCEGCKSFFKRSIRRNLSYTCRSNRDCQIDQHHRNQCQYCRLKKCFRVGMRKEAVQRGRIPHALPGPAACSPPGATGVEPFTGPPVSELIAQLLRAEPYPAAGRFGGGGAVLGIDNVCELAARLLFSTVEWARHAPFFPELPAADQVALLRLSWSELFVLNAAQAALPLHTAPLLAAAGLHAAPMAAERAVAFMDQVRAFQEQVDKLGRLQVDAAEYGCLKAIALFTPDACGLSDPAHVESLQEKAQVALTEYVRAQYPSQPQRFGRLLLRLPALRAVPASLISQLFFMRLVGKTPIETLIRDMLLSGSTFNWPYGSG</sequence>
<comment type="function">
    <text evidence="6 7 8">Transcription factor predominantly involved in transcriptional repression. Binds to promoter/enhancer response elements that contain the imperfect 5'-AGGTCA-3' direct or inverted repeats with various spacings which are also recognized by other nuclear hormone receptors. Involved in modulation of hormonal responses. Represses transcriptional activity of the lutropin-choriogonadotropic hormone receptor/LHCGR gene, the renin/REN gene and the oxytocin-neurophysin/OXT gene. Represses the triiodothyronine-dependent and -independent transcriptional activity of the thyroid hormone receptor gene in a cell type-specific manner. The corepressing function towards thyroid hormone receptor beta/THRB involves at least in part the inhibition of THRB binding to triiodothyronine response elements (TREs) by NR2F6. Inhibits NFATC transcription factor DNA binding and subsequently its transcriptional activity. Acts as transcriptional repressor of IL-17 expression in Th-17 differentiated CD4(+) T cells and may be involved in induction and/or maintenance of peripheral immunological tolerance and autoimmunity. Involved in development of forebrain circadian clock; is required early in the development of the locus coeruleus (LC).</text>
</comment>
<comment type="subunit">
    <text evidence="1">Binds DNA as dimer; homodimer and heterodimer with NR2F2 and probably NR2F1. Interacts with THRB (By similarity).</text>
</comment>
<comment type="interaction">
    <interactant intactId="EBI-4319956">
        <id>P43136</id>
    </interactant>
    <interactant intactId="EBI-4319979">
        <id>O35626</id>
        <label>Rasd1</label>
    </interactant>
    <organismsDiffer>false</organismsDiffer>
    <experiments>5</experiments>
</comment>
<comment type="subcellular location">
    <subcellularLocation>
        <location evidence="3 6">Nucleus</location>
    </subcellularLocation>
</comment>
<comment type="developmental stage">
    <text evidence="7">Initially expressed at 8.5 dpc in the developing rhombencephalon. At 11.5 dpc expression in the CNS rapidly decreases and in newborn and adult expression is not detectable in the brain with the exceptions of Purkinje neurons and the choroid plexi.</text>
</comment>
<comment type="disruption phenotype">
    <text evidence="7 8">Reduction of neurons in the locus coerulus of the developing cortex. Defects in circadian behavior. Hyperreactive lymphocytes, late-onset immunopathology and hypersusceptibility to Th17-dependent experimental autoimmune encephalomyelitis.</text>
</comment>
<comment type="similarity">
    <text evidence="9">Belongs to the nuclear hormone receptor family. NR2 subfamily.</text>
</comment>
<feature type="chain" id="PRO_0000053614" description="Nuclear receptor subfamily 2 group F member 6">
    <location>
        <begin position="1"/>
        <end position="390"/>
    </location>
</feature>
<feature type="domain" description="NR LBD" evidence="4">
    <location>
        <begin position="157"/>
        <end position="380"/>
    </location>
</feature>
<feature type="DNA-binding region" description="Nuclear receptor" evidence="3">
    <location>
        <begin position="54"/>
        <end position="129"/>
    </location>
</feature>
<feature type="zinc finger region" description="NR C4-type" evidence="3">
    <location>
        <begin position="57"/>
        <end position="77"/>
    </location>
</feature>
<feature type="zinc finger region" description="NR C4-type" evidence="3">
    <location>
        <begin position="93"/>
        <end position="117"/>
    </location>
</feature>
<feature type="region of interest" description="Disordered" evidence="5">
    <location>
        <begin position="1"/>
        <end position="50"/>
    </location>
</feature>
<feature type="region of interest" description="Important for dimerization" evidence="1">
    <location>
        <begin position="314"/>
        <end position="390"/>
    </location>
</feature>
<feature type="compositionally biased region" description="Gly residues" evidence="5">
    <location>
        <begin position="1"/>
        <end position="15"/>
    </location>
</feature>
<feature type="modified residue" description="Phosphoserine" evidence="10">
    <location>
        <position position="35"/>
    </location>
</feature>
<feature type="modified residue" description="Phosphoserine" evidence="2">
    <location>
        <position position="41"/>
    </location>
</feature>
<feature type="modified residue" description="Phosphoserine" evidence="2">
    <location>
        <position position="84"/>
    </location>
</feature>
<feature type="sequence conflict" description="In Ref. 2; AAA37532." evidence="9" ref="2">
    <original>D</original>
    <variation>G</variation>
    <location>
        <position position="10"/>
    </location>
</feature>
<feature type="sequence conflict" description="In Ref. 1; CAA54097 and 2; AAA37532." evidence="9" ref="1 2">
    <original>S</original>
    <variation>T</variation>
    <location>
        <position position="84"/>
    </location>
</feature>
<feature type="sequence conflict" description="In Ref. 2; AAA37532." evidence="9" ref="2">
    <original>P</original>
    <variation>H</variation>
    <location>
        <position position="152"/>
    </location>
</feature>
<feature type="sequence conflict" description="In Ref. 2; AAA37532." evidence="9" ref="2">
    <original>QL</original>
    <variation>HV</variation>
    <location>
        <begin position="164"/>
        <end position="165"/>
    </location>
</feature>
<feature type="sequence conflict" description="In Ref. 2; AAA37532." evidence="9" ref="2">
    <original>LLF</original>
    <variation>AV</variation>
    <location>
        <begin position="196"/>
        <end position="198"/>
    </location>
</feature>
<feature type="sequence conflict" description="In Ref. 2; AAA37532." evidence="9" ref="2">
    <original>LPL</original>
    <variation>VAV</variation>
    <location>
        <begin position="239"/>
        <end position="241"/>
    </location>
</feature>
<feature type="sequence conflict" description="In Ref. 1; CAA54097." evidence="9" ref="1">
    <original>Q</original>
    <variation>K</variation>
    <location>
        <position position="357"/>
    </location>
</feature>